<comment type="function">
    <text evidence="4">Protein phosphatase involved in abscisic acid (ABA) signaling. Together with PYL3 and SAPK10, may form an ABA signaling module involved in stress response.</text>
</comment>
<comment type="catalytic activity">
    <reaction evidence="4">
        <text>O-phospho-L-seryl-[protein] + H2O = L-seryl-[protein] + phosphate</text>
        <dbReference type="Rhea" id="RHEA:20629"/>
        <dbReference type="Rhea" id="RHEA-COMP:9863"/>
        <dbReference type="Rhea" id="RHEA-COMP:11604"/>
        <dbReference type="ChEBI" id="CHEBI:15377"/>
        <dbReference type="ChEBI" id="CHEBI:29999"/>
        <dbReference type="ChEBI" id="CHEBI:43474"/>
        <dbReference type="ChEBI" id="CHEBI:83421"/>
        <dbReference type="EC" id="3.1.3.16"/>
    </reaction>
</comment>
<comment type="catalytic activity">
    <reaction evidence="4">
        <text>O-phospho-L-threonyl-[protein] + H2O = L-threonyl-[protein] + phosphate</text>
        <dbReference type="Rhea" id="RHEA:47004"/>
        <dbReference type="Rhea" id="RHEA-COMP:11060"/>
        <dbReference type="Rhea" id="RHEA-COMP:11605"/>
        <dbReference type="ChEBI" id="CHEBI:15377"/>
        <dbReference type="ChEBI" id="CHEBI:30013"/>
        <dbReference type="ChEBI" id="CHEBI:43474"/>
        <dbReference type="ChEBI" id="CHEBI:61977"/>
        <dbReference type="EC" id="3.1.3.16"/>
    </reaction>
</comment>
<comment type="cofactor">
    <cofactor evidence="1">
        <name>Mg(2+)</name>
        <dbReference type="ChEBI" id="CHEBI:18420"/>
    </cofactor>
    <cofactor evidence="1">
        <name>Mn(2+)</name>
        <dbReference type="ChEBI" id="CHEBI:29035"/>
    </cofactor>
    <text evidence="1">Binds 2 magnesium or manganese ions per subunit.</text>
</comment>
<comment type="subunit">
    <text evidence="4">Interacts with PYL3, PYL5, PYL9 and PYL10. Binding to PYL3, PYL5, PYL9 and PYL10 is dependent on the presence of abscisic acid (ABA). Interacts with SAPK10.</text>
</comment>
<comment type="alternative products">
    <event type="alternative splicing"/>
    <isoform>
        <id>Q6L5H6-1</id>
        <name>1</name>
        <sequence type="displayed"/>
    </isoform>
    <isoform>
        <id>Q6L5H6-2</id>
        <name>2</name>
        <sequence type="described" ref="VSP_036271 VSP_036272"/>
    </isoform>
</comment>
<comment type="induction">
    <text evidence="3">Induced by abscisic acid (ABA).</text>
</comment>
<comment type="similarity">
    <text evidence="7">Belongs to the PP2C family.</text>
</comment>
<keyword id="KW-0002">3D-structure</keyword>
<keyword id="KW-0938">Abscisic acid signaling pathway</keyword>
<keyword id="KW-0025">Alternative splicing</keyword>
<keyword id="KW-0378">Hydrolase</keyword>
<keyword id="KW-0460">Magnesium</keyword>
<keyword id="KW-0464">Manganese</keyword>
<keyword id="KW-0479">Metal-binding</keyword>
<keyword id="KW-0904">Protein phosphatase</keyword>
<keyword id="KW-1185">Reference proteome</keyword>
<dbReference type="EC" id="3.1.3.16" evidence="4"/>
<dbReference type="EMBL" id="AC097112">
    <property type="protein sequence ID" value="AAT39223.1"/>
    <property type="molecule type" value="Genomic_DNA"/>
</dbReference>
<dbReference type="EMBL" id="AC119291">
    <property type="protein sequence ID" value="AAV59393.1"/>
    <property type="molecule type" value="Genomic_DNA"/>
</dbReference>
<dbReference type="EMBL" id="AP008211">
    <property type="protein sequence ID" value="BAF18083.2"/>
    <property type="molecule type" value="Genomic_DNA"/>
</dbReference>
<dbReference type="EMBL" id="AP014961">
    <property type="protein sequence ID" value="BAS95091.1"/>
    <property type="molecule type" value="Genomic_DNA"/>
</dbReference>
<dbReference type="RefSeq" id="XP_015639502.1">
    <property type="nucleotide sequence ID" value="XM_015784016.1"/>
</dbReference>
<dbReference type="PDB" id="5GWO">
    <property type="method" value="X-ray"/>
    <property type="resolution" value="2.82 A"/>
    <property type="chains" value="A/B=59-385"/>
</dbReference>
<dbReference type="PDB" id="5GWP">
    <property type="method" value="X-ray"/>
    <property type="resolution" value="2.58 A"/>
    <property type="chains" value="A/B=59-385"/>
</dbReference>
<dbReference type="PDB" id="5ZCG">
    <property type="method" value="X-ray"/>
    <property type="resolution" value="2.10 A"/>
    <property type="chains" value="A/B=58-385"/>
</dbReference>
<dbReference type="PDB" id="5ZCH">
    <property type="method" value="X-ray"/>
    <property type="resolution" value="2.47 A"/>
    <property type="chains" value="A/B=58-385"/>
</dbReference>
<dbReference type="PDB" id="5ZCL">
    <property type="method" value="X-ray"/>
    <property type="resolution" value="2.66 A"/>
    <property type="chains" value="A/B=58-385"/>
</dbReference>
<dbReference type="PDB" id="5ZCU">
    <property type="method" value="X-ray"/>
    <property type="resolution" value="2.41 A"/>
    <property type="chains" value="A/B=58-385"/>
</dbReference>
<dbReference type="PDBsum" id="5GWO"/>
<dbReference type="PDBsum" id="5GWP"/>
<dbReference type="PDBsum" id="5ZCG"/>
<dbReference type="PDBsum" id="5ZCH"/>
<dbReference type="PDBsum" id="5ZCL"/>
<dbReference type="PDBsum" id="5ZCU"/>
<dbReference type="SMR" id="Q6L5H6"/>
<dbReference type="FunCoup" id="Q6L5H6">
    <property type="interactions" value="197"/>
</dbReference>
<dbReference type="STRING" id="39947.Q6L5H6"/>
<dbReference type="PaxDb" id="39947-Q6L5H6"/>
<dbReference type="EnsemblPlants" id="Os05t0537400-01">
    <molecule id="Q6L5H6-1"/>
    <property type="protein sequence ID" value="Os05t0537400-01"/>
    <property type="gene ID" value="Os05g0537400"/>
</dbReference>
<dbReference type="Gramene" id="Os05t0537400-01">
    <molecule id="Q6L5H6-1"/>
    <property type="protein sequence ID" value="Os05t0537400-01"/>
    <property type="gene ID" value="Os05g0537400"/>
</dbReference>
<dbReference type="KEGG" id="dosa:Os05g0537400"/>
<dbReference type="eggNOG" id="KOG0698">
    <property type="taxonomic scope" value="Eukaryota"/>
</dbReference>
<dbReference type="HOGENOM" id="CLU_013173_20_4_1"/>
<dbReference type="InParanoid" id="Q6L5H6"/>
<dbReference type="OMA" id="HIDPCAR"/>
<dbReference type="OrthoDB" id="10264738at2759"/>
<dbReference type="PlantReactome" id="R-OSA-3899351">
    <property type="pathway name" value="Abscisic acid (ABA) mediated signaling"/>
</dbReference>
<dbReference type="Proteomes" id="UP000000763">
    <property type="component" value="Chromosome 5"/>
</dbReference>
<dbReference type="Proteomes" id="UP000059680">
    <property type="component" value="Chromosome 5"/>
</dbReference>
<dbReference type="GO" id="GO:0046872">
    <property type="term" value="F:metal ion binding"/>
    <property type="evidence" value="ECO:0007669"/>
    <property type="project" value="UniProtKB-KW"/>
</dbReference>
<dbReference type="GO" id="GO:0004722">
    <property type="term" value="F:protein serine/threonine phosphatase activity"/>
    <property type="evidence" value="ECO:0000314"/>
    <property type="project" value="UniProtKB"/>
</dbReference>
<dbReference type="GO" id="GO:0009738">
    <property type="term" value="P:abscisic acid-activated signaling pathway"/>
    <property type="evidence" value="ECO:0000315"/>
    <property type="project" value="UniProtKB"/>
</dbReference>
<dbReference type="GO" id="GO:1902531">
    <property type="term" value="P:regulation of intracellular signal transduction"/>
    <property type="evidence" value="ECO:0000318"/>
    <property type="project" value="GO_Central"/>
</dbReference>
<dbReference type="CDD" id="cd00143">
    <property type="entry name" value="PP2Cc"/>
    <property type="match status" value="1"/>
</dbReference>
<dbReference type="FunFam" id="3.60.40.10:FF:000291">
    <property type="entry name" value="Protein phosphatase 2C 50"/>
    <property type="match status" value="1"/>
</dbReference>
<dbReference type="Gene3D" id="3.60.40.10">
    <property type="entry name" value="PPM-type phosphatase domain"/>
    <property type="match status" value="1"/>
</dbReference>
<dbReference type="InterPro" id="IPR015655">
    <property type="entry name" value="PP2C"/>
</dbReference>
<dbReference type="InterPro" id="IPR000222">
    <property type="entry name" value="PP2C_BS"/>
</dbReference>
<dbReference type="InterPro" id="IPR036457">
    <property type="entry name" value="PPM-type-like_dom_sf"/>
</dbReference>
<dbReference type="InterPro" id="IPR001932">
    <property type="entry name" value="PPM-type_phosphatase-like_dom"/>
</dbReference>
<dbReference type="PANTHER" id="PTHR47992">
    <property type="entry name" value="PROTEIN PHOSPHATASE"/>
    <property type="match status" value="1"/>
</dbReference>
<dbReference type="Pfam" id="PF00481">
    <property type="entry name" value="PP2C"/>
    <property type="match status" value="1"/>
</dbReference>
<dbReference type="SMART" id="SM00331">
    <property type="entry name" value="PP2C_SIG"/>
    <property type="match status" value="1"/>
</dbReference>
<dbReference type="SMART" id="SM00332">
    <property type="entry name" value="PP2Cc"/>
    <property type="match status" value="1"/>
</dbReference>
<dbReference type="SUPFAM" id="SSF81606">
    <property type="entry name" value="PP2C-like"/>
    <property type="match status" value="1"/>
</dbReference>
<dbReference type="PROSITE" id="PS01032">
    <property type="entry name" value="PPM_1"/>
    <property type="match status" value="1"/>
</dbReference>
<dbReference type="PROSITE" id="PS51746">
    <property type="entry name" value="PPM_2"/>
    <property type="match status" value="1"/>
</dbReference>
<evidence type="ECO:0000250" key="1"/>
<evidence type="ECO:0000255" key="2">
    <source>
        <dbReference type="PROSITE-ProRule" id="PRU01082"/>
    </source>
</evidence>
<evidence type="ECO:0000269" key="3">
    <source>
    </source>
</evidence>
<evidence type="ECO:0000269" key="4">
    <source>
    </source>
</evidence>
<evidence type="ECO:0000303" key="5">
    <source>
    </source>
</evidence>
<evidence type="ECO:0000303" key="6">
    <source>
    </source>
</evidence>
<evidence type="ECO:0000305" key="7"/>
<evidence type="ECO:0000312" key="8">
    <source>
        <dbReference type="EMBL" id="AAT39223.1"/>
    </source>
</evidence>
<evidence type="ECO:0000312" key="9">
    <source>
        <dbReference type="EMBL" id="AAV59393.1"/>
    </source>
</evidence>
<evidence type="ECO:0000312" key="10">
    <source>
        <dbReference type="EMBL" id="BAS95091.1"/>
    </source>
</evidence>
<evidence type="ECO:0007829" key="11">
    <source>
        <dbReference type="PDB" id="5GWO"/>
    </source>
</evidence>
<evidence type="ECO:0007829" key="12">
    <source>
        <dbReference type="PDB" id="5ZCG"/>
    </source>
</evidence>
<evidence type="ECO:0007829" key="13">
    <source>
        <dbReference type="PDB" id="5ZCL"/>
    </source>
</evidence>
<proteinExistence type="evidence at protein level"/>
<gene>
    <name evidence="5" type="primary">PP2C50</name>
    <name evidence="6" type="synonym">ABIL3</name>
    <name evidence="10" type="ordered locus">Os05g0537400</name>
    <name evidence="7" type="ordered locus">LOC_Os05g46040</name>
    <name evidence="8" type="ORF">OJ1741_B01.18</name>
    <name evidence="9" type="ORF">OSJNBa0052K01.2</name>
</gene>
<reference key="1">
    <citation type="journal article" date="2005" name="Mol. Genet. Genomics">
        <title>A fine physical map of the rice chromosome 5.</title>
        <authorList>
            <person name="Cheng C.-H."/>
            <person name="Chung M.C."/>
            <person name="Liu S.-M."/>
            <person name="Chen S.-K."/>
            <person name="Kao F.Y."/>
            <person name="Lin S.-J."/>
            <person name="Hsiao S.-H."/>
            <person name="Tseng I.C."/>
            <person name="Hsing Y.-I.C."/>
            <person name="Wu H.-P."/>
            <person name="Chen C.-S."/>
            <person name="Shaw J.-F."/>
            <person name="Wu J."/>
            <person name="Matsumoto T."/>
            <person name="Sasaki T."/>
            <person name="Chen H.-C."/>
            <person name="Chow T.-Y."/>
        </authorList>
    </citation>
    <scope>NUCLEOTIDE SEQUENCE [LARGE SCALE GENOMIC DNA]</scope>
    <source>
        <strain>cv. Nipponbare</strain>
    </source>
</reference>
<reference key="2">
    <citation type="journal article" date="2005" name="Nature">
        <title>The map-based sequence of the rice genome.</title>
        <authorList>
            <consortium name="International rice genome sequencing project (IRGSP)"/>
        </authorList>
    </citation>
    <scope>NUCLEOTIDE SEQUENCE [LARGE SCALE GENOMIC DNA]</scope>
    <source>
        <strain>cv. Nipponbare</strain>
    </source>
</reference>
<reference key="3">
    <citation type="journal article" date="2008" name="Nucleic Acids Res.">
        <title>The rice annotation project database (RAP-DB): 2008 update.</title>
        <authorList>
            <consortium name="The rice annotation project (RAP)"/>
        </authorList>
    </citation>
    <scope>GENOME REANNOTATION</scope>
    <source>
        <strain>cv. Nipponbare</strain>
    </source>
</reference>
<reference key="4">
    <citation type="journal article" date="2013" name="Rice">
        <title>Improvement of the Oryza sativa Nipponbare reference genome using next generation sequence and optical map data.</title>
        <authorList>
            <person name="Kawahara Y."/>
            <person name="de la Bastide M."/>
            <person name="Hamilton J.P."/>
            <person name="Kanamori H."/>
            <person name="McCombie W.R."/>
            <person name="Ouyang S."/>
            <person name="Schwartz D.C."/>
            <person name="Tanaka T."/>
            <person name="Wu J."/>
            <person name="Zhou S."/>
            <person name="Childs K.L."/>
            <person name="Davidson R.M."/>
            <person name="Lin H."/>
            <person name="Quesada-Ocampo L."/>
            <person name="Vaillancourt B."/>
            <person name="Sakai H."/>
            <person name="Lee S.S."/>
            <person name="Kim J."/>
            <person name="Numa H."/>
            <person name="Itoh T."/>
            <person name="Buell C.R."/>
            <person name="Matsumoto T."/>
        </authorList>
    </citation>
    <scope>GENOME REANNOTATION</scope>
    <source>
        <strain>cv. Nipponbare</strain>
    </source>
</reference>
<reference key="5">
    <citation type="journal article" date="2008" name="BMC Genomics">
        <title>Genome-wide and expression analysis of protein phosphatase 2C in rice and Arabidopsis.</title>
        <authorList>
            <person name="Xue T."/>
            <person name="Wang D."/>
            <person name="Zhang S."/>
            <person name="Ehlting J."/>
            <person name="Ni F."/>
            <person name="Jacab S."/>
            <person name="Zheng C."/>
            <person name="Zhong Y."/>
        </authorList>
    </citation>
    <scope>GENE FAMILY</scope>
    <scope>NOMENCLATURE</scope>
</reference>
<reference key="6">
    <citation type="journal article" date="2015" name="Plant Cell Physiol.">
        <title>ABA regulates subcellular redistribution of OsABI-LIKE2, a negative regulator in ABA signaling, to control root architecture and drought resistance in Oryza sativa.</title>
        <authorList>
            <person name="Li C."/>
            <person name="Shen H."/>
            <person name="Wang T."/>
            <person name="Wang X."/>
        </authorList>
    </citation>
    <scope>INDUCTION BY ABSCISIC ACID</scope>
</reference>
<reference key="7">
    <citation type="journal article" date="2017" name="Mol. Plant">
        <title>Modulation of ABA signaling by altering VxGL motif of PP2Cs in Oryza sativa.</title>
        <authorList>
            <person name="Han S."/>
            <person name="Min M.K."/>
            <person name="Lee S.Y."/>
            <person name="Lim C.W."/>
            <person name="Bhatnagar N."/>
            <person name="Lee Y."/>
            <person name="Shin D."/>
            <person name="Chung K.Y."/>
            <person name="Lee S.C."/>
            <person name="Kim B.G."/>
            <person name="Lee S."/>
        </authorList>
    </citation>
    <scope>X-RAY CRYSTALLOGRAPHY (2.58 ANGSTROMS) OF 59-385</scope>
    <scope>FUNCTION</scope>
    <scope>CATALYTIC ACTIVITY</scope>
    <scope>INTERACTION WITH PYL3; PYL5; PYL9; PYL10 AND SAPK10</scope>
    <scope>VXGXL MOTIF</scope>
    <scope>MUTAGENESIS OF SER-265 AND ILE-267</scope>
</reference>
<protein>
    <recommendedName>
        <fullName evidence="7">Protein phosphatase 2C 50</fullName>
        <shortName evidence="5">OsPP2C50</shortName>
        <ecNumber evidence="4">3.1.3.16</ecNumber>
    </recommendedName>
    <alternativeName>
        <fullName evidence="7">ABI1-like protein 3</fullName>
        <shortName evidence="6">OsABI-LIKE3</shortName>
        <shortName evidence="6">OsABIL3</shortName>
    </alternativeName>
</protein>
<feature type="chain" id="PRO_0000363297" description="Protein phosphatase 2C 50">
    <location>
        <begin position="1"/>
        <end position="387"/>
    </location>
</feature>
<feature type="domain" description="PPM-type phosphatase" evidence="2">
    <location>
        <begin position="60"/>
        <end position="377"/>
    </location>
</feature>
<feature type="short sequence motif" description="Modulates binding affinity to PYR/PYL/RCAR abscisic acid intracellular receptors" evidence="4">
    <location>
        <begin position="264"/>
        <end position="268"/>
    </location>
</feature>
<feature type="binding site" evidence="1">
    <location>
        <position position="118"/>
    </location>
    <ligand>
        <name>Mn(2+)</name>
        <dbReference type="ChEBI" id="CHEBI:29035"/>
        <label>1</label>
    </ligand>
</feature>
<feature type="binding site" evidence="1">
    <location>
        <position position="118"/>
    </location>
    <ligand>
        <name>Mn(2+)</name>
        <dbReference type="ChEBI" id="CHEBI:29035"/>
        <label>2</label>
    </ligand>
</feature>
<feature type="binding site" evidence="1">
    <location>
        <position position="119"/>
    </location>
    <ligand>
        <name>Mn(2+)</name>
        <dbReference type="ChEBI" id="CHEBI:29035"/>
        <label>1</label>
    </ligand>
</feature>
<feature type="binding site" evidence="1">
    <location>
        <position position="306"/>
    </location>
    <ligand>
        <name>Mn(2+)</name>
        <dbReference type="ChEBI" id="CHEBI:29035"/>
        <label>2</label>
    </ligand>
</feature>
<feature type="binding site" evidence="1">
    <location>
        <position position="368"/>
    </location>
    <ligand>
        <name>Mn(2+)</name>
        <dbReference type="ChEBI" id="CHEBI:29035"/>
        <label>2</label>
    </ligand>
</feature>
<feature type="splice variant" id="VSP_036271" description="In isoform 2." evidence="7">
    <original>DRYLKPFVIPKPEVMVVPRAK</original>
    <variation>MHIDPCARSRLKHLSVSFPCK</variation>
    <location>
        <begin position="276"/>
        <end position="296"/>
    </location>
</feature>
<feature type="splice variant" id="VSP_036272" description="In isoform 2." evidence="7">
    <location>
        <begin position="297"/>
        <end position="387"/>
    </location>
</feature>
<feature type="mutagenesis site" description="Decreases binding affinity to PYL3 15-fold; when associated with M-267." evidence="4">
    <original>S</original>
    <variation>F</variation>
    <location>
        <position position="265"/>
    </location>
</feature>
<feature type="mutagenesis site" description="Abolishes interaction with PYR/PYL/RCAR abscisic acid intracellular receptors; when associated with K-267." evidence="4">
    <original>S</original>
    <variation>K</variation>
    <location>
        <position position="265"/>
    </location>
</feature>
<feature type="mutagenesis site" description="Abolishes interaction with PYR/PYL/RCAR abscisic acid intracellular receptors; when associated with K-265." evidence="4">
    <original>I</original>
    <variation>K</variation>
    <location>
        <position position="267"/>
    </location>
</feature>
<feature type="mutagenesis site" description="Decreases binding affinity to PYL3 15-fold; when associated with F-265." evidence="4">
    <original>I</original>
    <variation>M</variation>
    <location>
        <position position="267"/>
    </location>
</feature>
<feature type="strand" evidence="12">
    <location>
        <begin position="60"/>
        <end position="66"/>
    </location>
</feature>
<feature type="strand" evidence="12">
    <location>
        <begin position="70"/>
        <end position="72"/>
    </location>
</feature>
<feature type="strand" evidence="12">
    <location>
        <begin position="75"/>
        <end position="85"/>
    </location>
</feature>
<feature type="helix" evidence="12">
    <location>
        <begin position="88"/>
        <end position="90"/>
    </location>
</feature>
<feature type="helix" evidence="12">
    <location>
        <begin position="94"/>
        <end position="98"/>
    </location>
</feature>
<feature type="turn" evidence="12">
    <location>
        <begin position="99"/>
        <end position="101"/>
    </location>
</feature>
<feature type="turn" evidence="12">
    <location>
        <begin position="104"/>
        <end position="106"/>
    </location>
</feature>
<feature type="strand" evidence="12">
    <location>
        <begin position="110"/>
        <end position="123"/>
    </location>
</feature>
<feature type="helix" evidence="12">
    <location>
        <begin position="124"/>
        <end position="148"/>
    </location>
</feature>
<feature type="turn" evidence="11">
    <location>
        <begin position="149"/>
        <end position="151"/>
    </location>
</feature>
<feature type="helix" evidence="12">
    <location>
        <begin position="156"/>
        <end position="175"/>
    </location>
</feature>
<feature type="strand" evidence="13">
    <location>
        <begin position="177"/>
        <end position="179"/>
    </location>
</feature>
<feature type="strand" evidence="13">
    <location>
        <begin position="181"/>
        <end position="183"/>
    </location>
</feature>
<feature type="turn" evidence="13">
    <location>
        <begin position="184"/>
        <end position="187"/>
    </location>
</feature>
<feature type="strand" evidence="13">
    <location>
        <begin position="188"/>
        <end position="190"/>
    </location>
</feature>
<feature type="strand" evidence="12">
    <location>
        <begin position="203"/>
        <end position="208"/>
    </location>
</feature>
<feature type="strand" evidence="12">
    <location>
        <begin position="210"/>
        <end position="220"/>
    </location>
</feature>
<feature type="strand" evidence="12">
    <location>
        <begin position="222"/>
        <end position="227"/>
    </location>
</feature>
<feature type="strand" evidence="12">
    <location>
        <begin position="230"/>
        <end position="234"/>
    </location>
</feature>
<feature type="helix" evidence="12">
    <location>
        <begin position="243"/>
        <end position="251"/>
    </location>
</feature>
<feature type="strand" evidence="12">
    <location>
        <begin position="256"/>
        <end position="264"/>
    </location>
</feature>
<feature type="turn" evidence="12">
    <location>
        <begin position="265"/>
        <end position="267"/>
    </location>
</feature>
<feature type="helix" evidence="12">
    <location>
        <begin position="277"/>
        <end position="279"/>
    </location>
</feature>
<feature type="turn" evidence="12">
    <location>
        <begin position="280"/>
        <end position="282"/>
    </location>
</feature>
<feature type="strand" evidence="12">
    <location>
        <begin position="288"/>
        <end position="293"/>
    </location>
</feature>
<feature type="strand" evidence="12">
    <location>
        <begin position="298"/>
        <end position="304"/>
    </location>
</feature>
<feature type="helix" evidence="12">
    <location>
        <begin position="306"/>
        <end position="309"/>
    </location>
</feature>
<feature type="helix" evidence="12">
    <location>
        <begin position="314"/>
        <end position="331"/>
    </location>
</feature>
<feature type="helix" evidence="12">
    <location>
        <begin position="348"/>
        <end position="363"/>
    </location>
</feature>
<feature type="strand" evidence="12">
    <location>
        <begin position="370"/>
        <end position="376"/>
    </location>
</feature>
<organism>
    <name type="scientific">Oryza sativa subsp. japonica</name>
    <name type="common">Rice</name>
    <dbReference type="NCBI Taxonomy" id="39947"/>
    <lineage>
        <taxon>Eukaryota</taxon>
        <taxon>Viridiplantae</taxon>
        <taxon>Streptophyta</taxon>
        <taxon>Embryophyta</taxon>
        <taxon>Tracheophyta</taxon>
        <taxon>Spermatophyta</taxon>
        <taxon>Magnoliopsida</taxon>
        <taxon>Liliopsida</taxon>
        <taxon>Poales</taxon>
        <taxon>Poaceae</taxon>
        <taxon>BOP clade</taxon>
        <taxon>Oryzoideae</taxon>
        <taxon>Oryzeae</taxon>
        <taxon>Oryzinae</taxon>
        <taxon>Oryza</taxon>
        <taxon>Oryza sativa</taxon>
    </lineage>
</organism>
<sequence>MAAAAAAAAICGEDETAARVGCTGEWAGGIERVDLGERKEAVAAAGAGKRSVYLMDCAPVWGCASTRGRSAEMEDASAAVPRFADVPVRLLASRRDLDALGLDADALRLPAHLFGVFDGHGGAEVANYCRERIHVVLSEELKRLGKNLGEMGEVDMKEHWDDVFTKCFQRVDDEVSGRVTRVVNGGGEVRSEPVTAENVGSTAVVALVCSSHVVVANCGDSRIVLCRGKEPVALSIDHKPDRKDERARIEAQGGKVIQWNGYRVSGILAMSRSIGDRYLKPFVIPKPEVMVVPRAKDDDCLILASDGLWDVVSNEEACKVARRQILLWHKNNGAASPLSDEGEGSTDPAAQAAADYLMRLALKKGSEDNITVIVVDLKPRKKLKNIS</sequence>
<accession>Q6L5H6</accession>
<accession>Q0DGE0</accession>
<name>P2C50_ORYSJ</name>